<keyword id="KW-0067">ATP-binding</keyword>
<keyword id="KW-0436">Ligase</keyword>
<keyword id="KW-0547">Nucleotide-binding</keyword>
<keyword id="KW-0648">Protein biosynthesis</keyword>
<organism>
    <name type="scientific">Bordetella petrii (strain ATCC BAA-461 / DSM 12804 / CCUG 43448)</name>
    <dbReference type="NCBI Taxonomy" id="340100"/>
    <lineage>
        <taxon>Bacteria</taxon>
        <taxon>Pseudomonadati</taxon>
        <taxon>Pseudomonadota</taxon>
        <taxon>Betaproteobacteria</taxon>
        <taxon>Burkholderiales</taxon>
        <taxon>Alcaligenaceae</taxon>
        <taxon>Bordetella</taxon>
    </lineage>
</organism>
<accession>A9I0H0</accession>
<gene>
    <name evidence="1" type="primary">gatB</name>
    <name type="ordered locus">Bpet0424</name>
</gene>
<reference key="1">
    <citation type="journal article" date="2008" name="BMC Genomics">
        <title>The missing link: Bordetella petrii is endowed with both the metabolic versatility of environmental bacteria and virulence traits of pathogenic Bordetellae.</title>
        <authorList>
            <person name="Gross R."/>
            <person name="Guzman C.A."/>
            <person name="Sebaihia M."/>
            <person name="Martin dos Santos V.A.P."/>
            <person name="Pieper D.H."/>
            <person name="Koebnik R."/>
            <person name="Lechner M."/>
            <person name="Bartels D."/>
            <person name="Buhrmester J."/>
            <person name="Choudhuri J.V."/>
            <person name="Ebensen T."/>
            <person name="Gaigalat L."/>
            <person name="Herrmann S."/>
            <person name="Khachane A.N."/>
            <person name="Larisch C."/>
            <person name="Link S."/>
            <person name="Linke B."/>
            <person name="Meyer F."/>
            <person name="Mormann S."/>
            <person name="Nakunst D."/>
            <person name="Rueckert C."/>
            <person name="Schneiker-Bekel S."/>
            <person name="Schulze K."/>
            <person name="Voerholter F.-J."/>
            <person name="Yevsa T."/>
            <person name="Engle J.T."/>
            <person name="Goldman W.E."/>
            <person name="Puehler A."/>
            <person name="Goebel U.B."/>
            <person name="Goesmann A."/>
            <person name="Bloecker H."/>
            <person name="Kaiser O."/>
            <person name="Martinez-Arias R."/>
        </authorList>
    </citation>
    <scope>NUCLEOTIDE SEQUENCE [LARGE SCALE GENOMIC DNA]</scope>
    <source>
        <strain>ATCC BAA-461 / DSM 12804 / CCUG 43448</strain>
    </source>
</reference>
<dbReference type="EC" id="6.3.5.-" evidence="1"/>
<dbReference type="EMBL" id="AM902716">
    <property type="protein sequence ID" value="CAP40756.1"/>
    <property type="molecule type" value="Genomic_DNA"/>
</dbReference>
<dbReference type="SMR" id="A9I0H0"/>
<dbReference type="STRING" id="94624.Bpet0424"/>
<dbReference type="KEGG" id="bpt:Bpet0424"/>
<dbReference type="eggNOG" id="COG0064">
    <property type="taxonomic scope" value="Bacteria"/>
</dbReference>
<dbReference type="Proteomes" id="UP000001225">
    <property type="component" value="Chromosome"/>
</dbReference>
<dbReference type="GO" id="GO:0050566">
    <property type="term" value="F:asparaginyl-tRNA synthase (glutamine-hydrolyzing) activity"/>
    <property type="evidence" value="ECO:0007669"/>
    <property type="project" value="RHEA"/>
</dbReference>
<dbReference type="GO" id="GO:0005524">
    <property type="term" value="F:ATP binding"/>
    <property type="evidence" value="ECO:0007669"/>
    <property type="project" value="UniProtKB-KW"/>
</dbReference>
<dbReference type="GO" id="GO:0050567">
    <property type="term" value="F:glutaminyl-tRNA synthase (glutamine-hydrolyzing) activity"/>
    <property type="evidence" value="ECO:0007669"/>
    <property type="project" value="UniProtKB-UniRule"/>
</dbReference>
<dbReference type="GO" id="GO:0070681">
    <property type="term" value="P:glutaminyl-tRNAGln biosynthesis via transamidation"/>
    <property type="evidence" value="ECO:0007669"/>
    <property type="project" value="TreeGrafter"/>
</dbReference>
<dbReference type="GO" id="GO:0006412">
    <property type="term" value="P:translation"/>
    <property type="evidence" value="ECO:0007669"/>
    <property type="project" value="UniProtKB-UniRule"/>
</dbReference>
<dbReference type="FunFam" id="1.10.10.410:FF:000001">
    <property type="entry name" value="Aspartyl/glutamyl-tRNA(Asn/Gln) amidotransferase subunit B"/>
    <property type="match status" value="1"/>
</dbReference>
<dbReference type="Gene3D" id="1.10.10.410">
    <property type="match status" value="1"/>
</dbReference>
<dbReference type="Gene3D" id="1.10.150.380">
    <property type="entry name" value="GatB domain, N-terminal subdomain"/>
    <property type="match status" value="1"/>
</dbReference>
<dbReference type="HAMAP" id="MF_00121">
    <property type="entry name" value="GatB"/>
    <property type="match status" value="1"/>
</dbReference>
<dbReference type="InterPro" id="IPR017959">
    <property type="entry name" value="Asn/Gln-tRNA_amidoTrfase_suB/E"/>
</dbReference>
<dbReference type="InterPro" id="IPR006075">
    <property type="entry name" value="Asn/Gln-tRNA_Trfase_suB/E_cat"/>
</dbReference>
<dbReference type="InterPro" id="IPR018027">
    <property type="entry name" value="Asn/Gln_amidotransferase"/>
</dbReference>
<dbReference type="InterPro" id="IPR003789">
    <property type="entry name" value="Asn/Gln_tRNA_amidoTrase-B-like"/>
</dbReference>
<dbReference type="InterPro" id="IPR004413">
    <property type="entry name" value="GatB"/>
</dbReference>
<dbReference type="InterPro" id="IPR042114">
    <property type="entry name" value="GatB_C_1"/>
</dbReference>
<dbReference type="InterPro" id="IPR023168">
    <property type="entry name" value="GatB_Yqey_C_2"/>
</dbReference>
<dbReference type="InterPro" id="IPR017958">
    <property type="entry name" value="Gln-tRNA_amidoTrfase_suB_CS"/>
</dbReference>
<dbReference type="InterPro" id="IPR014746">
    <property type="entry name" value="Gln_synth/guanido_kin_cat_dom"/>
</dbReference>
<dbReference type="NCBIfam" id="TIGR00133">
    <property type="entry name" value="gatB"/>
    <property type="match status" value="1"/>
</dbReference>
<dbReference type="NCBIfam" id="NF004012">
    <property type="entry name" value="PRK05477.1-2"/>
    <property type="match status" value="1"/>
</dbReference>
<dbReference type="NCBIfam" id="NF004014">
    <property type="entry name" value="PRK05477.1-4"/>
    <property type="match status" value="1"/>
</dbReference>
<dbReference type="NCBIfam" id="NF004015">
    <property type="entry name" value="PRK05477.1-5"/>
    <property type="match status" value="1"/>
</dbReference>
<dbReference type="PANTHER" id="PTHR11659">
    <property type="entry name" value="GLUTAMYL-TRNA GLN AMIDOTRANSFERASE SUBUNIT B MITOCHONDRIAL AND PROKARYOTIC PET112-RELATED"/>
    <property type="match status" value="1"/>
</dbReference>
<dbReference type="PANTHER" id="PTHR11659:SF0">
    <property type="entry name" value="GLUTAMYL-TRNA(GLN) AMIDOTRANSFERASE SUBUNIT B, MITOCHONDRIAL"/>
    <property type="match status" value="1"/>
</dbReference>
<dbReference type="Pfam" id="PF02934">
    <property type="entry name" value="GatB_N"/>
    <property type="match status" value="1"/>
</dbReference>
<dbReference type="Pfam" id="PF02637">
    <property type="entry name" value="GatB_Yqey"/>
    <property type="match status" value="1"/>
</dbReference>
<dbReference type="SMART" id="SM00845">
    <property type="entry name" value="GatB_Yqey"/>
    <property type="match status" value="1"/>
</dbReference>
<dbReference type="SUPFAM" id="SSF89095">
    <property type="entry name" value="GatB/YqeY motif"/>
    <property type="match status" value="1"/>
</dbReference>
<dbReference type="SUPFAM" id="SSF55931">
    <property type="entry name" value="Glutamine synthetase/guanido kinase"/>
    <property type="match status" value="1"/>
</dbReference>
<dbReference type="PROSITE" id="PS01234">
    <property type="entry name" value="GATB"/>
    <property type="match status" value="1"/>
</dbReference>
<feature type="chain" id="PRO_1000095187" description="Aspartyl/glutamyl-tRNA(Asn/Gln) amidotransferase subunit B">
    <location>
        <begin position="1"/>
        <end position="485"/>
    </location>
</feature>
<name>GATB_BORPD</name>
<comment type="function">
    <text evidence="1">Allows the formation of correctly charged Asn-tRNA(Asn) or Gln-tRNA(Gln) through the transamidation of misacylated Asp-tRNA(Asn) or Glu-tRNA(Gln) in organisms which lack either or both of asparaginyl-tRNA or glutaminyl-tRNA synthetases. The reaction takes place in the presence of glutamine and ATP through an activated phospho-Asp-tRNA(Asn) or phospho-Glu-tRNA(Gln).</text>
</comment>
<comment type="catalytic activity">
    <reaction evidence="1">
        <text>L-glutamyl-tRNA(Gln) + L-glutamine + ATP + H2O = L-glutaminyl-tRNA(Gln) + L-glutamate + ADP + phosphate + H(+)</text>
        <dbReference type="Rhea" id="RHEA:17521"/>
        <dbReference type="Rhea" id="RHEA-COMP:9681"/>
        <dbReference type="Rhea" id="RHEA-COMP:9684"/>
        <dbReference type="ChEBI" id="CHEBI:15377"/>
        <dbReference type="ChEBI" id="CHEBI:15378"/>
        <dbReference type="ChEBI" id="CHEBI:29985"/>
        <dbReference type="ChEBI" id="CHEBI:30616"/>
        <dbReference type="ChEBI" id="CHEBI:43474"/>
        <dbReference type="ChEBI" id="CHEBI:58359"/>
        <dbReference type="ChEBI" id="CHEBI:78520"/>
        <dbReference type="ChEBI" id="CHEBI:78521"/>
        <dbReference type="ChEBI" id="CHEBI:456216"/>
    </reaction>
</comment>
<comment type="catalytic activity">
    <reaction evidence="1">
        <text>L-aspartyl-tRNA(Asn) + L-glutamine + ATP + H2O = L-asparaginyl-tRNA(Asn) + L-glutamate + ADP + phosphate + 2 H(+)</text>
        <dbReference type="Rhea" id="RHEA:14513"/>
        <dbReference type="Rhea" id="RHEA-COMP:9674"/>
        <dbReference type="Rhea" id="RHEA-COMP:9677"/>
        <dbReference type="ChEBI" id="CHEBI:15377"/>
        <dbReference type="ChEBI" id="CHEBI:15378"/>
        <dbReference type="ChEBI" id="CHEBI:29985"/>
        <dbReference type="ChEBI" id="CHEBI:30616"/>
        <dbReference type="ChEBI" id="CHEBI:43474"/>
        <dbReference type="ChEBI" id="CHEBI:58359"/>
        <dbReference type="ChEBI" id="CHEBI:78515"/>
        <dbReference type="ChEBI" id="CHEBI:78516"/>
        <dbReference type="ChEBI" id="CHEBI:456216"/>
    </reaction>
</comment>
<comment type="subunit">
    <text evidence="1">Heterotrimer of A, B and C subunits.</text>
</comment>
<comment type="similarity">
    <text evidence="1">Belongs to the GatB/GatE family. GatB subfamily.</text>
</comment>
<evidence type="ECO:0000255" key="1">
    <source>
        <dbReference type="HAMAP-Rule" id="MF_00121"/>
    </source>
</evidence>
<sequence length="485" mass="52745">MNWEIVIGLETHTQLSTDAKIFSGSSTRFGAAPNTQANVIDLALPGSLPVMNRGAAERAIRFGLAVGGKVAPRSVFARKNYFYPDLPKGYQISQYELPVVLGGSLSFFVGEQEKTVNLTRAHLEEDAGKSLHDDFALASGAPASGIDLNRAGTPLLEIVTEPEMRSAAEAVAYARALHSLVVWLGICDGNMQEGSFRCDANVSVRPVGQKEFGTRTEIKNVNSFRFLERAILFEARRQIELIEDGGTVVQETRLYDADRDETRSMRSKEDAHDYRYFPDPDLPPLVISPEWVEEVRANMPELPAALRERFQRDYGLSAYDAAQLSASRGLASYFEDVARALPAGQAKQAANWIMGEVTATLNREEKDIADAPVQAPALAALIGRIIDGTISNKIARDVFSAMWAGEHGGQPDAIIEARGLKQISDTGAIGAMIDEVLAANPAIVAEYRAGKQKAFNSLVGQIMKAAKGKANPQQVNELLKQKLEG</sequence>
<protein>
    <recommendedName>
        <fullName evidence="1">Aspartyl/glutamyl-tRNA(Asn/Gln) amidotransferase subunit B</fullName>
        <shortName evidence="1">Asp/Glu-ADT subunit B</shortName>
        <ecNumber evidence="1">6.3.5.-</ecNumber>
    </recommendedName>
</protein>
<proteinExistence type="inferred from homology"/>